<gene>
    <name evidence="19" type="primary">PE_PGRS33</name>
    <name evidence="19" type="ordered locus">Rv1818c</name>
    <name type="ORF">MTCY1A11.25c</name>
</gene>
<organism>
    <name type="scientific">Mycobacterium tuberculosis (strain ATCC 25618 / H37Rv)</name>
    <dbReference type="NCBI Taxonomy" id="83332"/>
    <lineage>
        <taxon>Bacteria</taxon>
        <taxon>Bacillati</taxon>
        <taxon>Actinomycetota</taxon>
        <taxon>Actinomycetes</taxon>
        <taxon>Mycobacteriales</taxon>
        <taxon>Mycobacteriaceae</taxon>
        <taxon>Mycobacterium</taxon>
        <taxon>Mycobacterium tuberculosis complex</taxon>
    </lineage>
</organism>
<reference key="1">
    <citation type="journal article" date="1998" name="Nature">
        <title>Deciphering the biology of Mycobacterium tuberculosis from the complete genome sequence.</title>
        <authorList>
            <person name="Cole S.T."/>
            <person name="Brosch R."/>
            <person name="Parkhill J."/>
            <person name="Garnier T."/>
            <person name="Churcher C.M."/>
            <person name="Harris D.E."/>
            <person name="Gordon S.V."/>
            <person name="Eiglmeier K."/>
            <person name="Gas S."/>
            <person name="Barry C.E. III"/>
            <person name="Tekaia F."/>
            <person name="Badcock K."/>
            <person name="Basham D."/>
            <person name="Brown D."/>
            <person name="Chillingworth T."/>
            <person name="Connor R."/>
            <person name="Davies R.M."/>
            <person name="Devlin K."/>
            <person name="Feltwell T."/>
            <person name="Gentles S."/>
            <person name="Hamlin N."/>
            <person name="Holroyd S."/>
            <person name="Hornsby T."/>
            <person name="Jagels K."/>
            <person name="Krogh A."/>
            <person name="McLean J."/>
            <person name="Moule S."/>
            <person name="Murphy L.D."/>
            <person name="Oliver S."/>
            <person name="Osborne J."/>
            <person name="Quail M.A."/>
            <person name="Rajandream M.A."/>
            <person name="Rogers J."/>
            <person name="Rutter S."/>
            <person name="Seeger K."/>
            <person name="Skelton S."/>
            <person name="Squares S."/>
            <person name="Squares R."/>
            <person name="Sulston J.E."/>
            <person name="Taylor K."/>
            <person name="Whitehead S."/>
            <person name="Barrell B.G."/>
        </authorList>
    </citation>
    <scope>NUCLEOTIDE SEQUENCE [LARGE SCALE GENOMIC DNA]</scope>
    <source>
        <strain>ATCC 25618 / H37Rv</strain>
    </source>
</reference>
<reference key="2">
    <citation type="journal article" date="2001" name="Infect. Immun.">
        <title>Comparative immune response to PE and PE_PGRS antigens of Mycobacterium tuberculosis.</title>
        <authorList>
            <person name="Delogu G."/>
            <person name="Brennan M.J."/>
        </authorList>
    </citation>
    <scope>BIOTECHNOLOGY</scope>
    <scope>IMMUNE RESPONSE</scope>
</reference>
<reference key="3">
    <citation type="journal article" date="2002" name="Mol. Microbiol.">
        <title>Are the PE-PGRS proteins of Mycobacterium tuberculosis variable surface antigens?</title>
        <authorList>
            <person name="Banu S."/>
            <person name="Honore N."/>
            <person name="Saint-Joanis B."/>
            <person name="Philpott D."/>
            <person name="Prevost M.C."/>
            <person name="Cole S.T."/>
        </authorList>
    </citation>
    <scope>INDUCTION</scope>
</reference>
<reference key="4">
    <citation type="journal article" date="2004" name="Mol. Microbiol.">
        <title>Rv1818c-encoded PE_PGRS protein of Mycobacterium tuberculosis is surface exposed and influences bacterial cell structure.</title>
        <authorList>
            <person name="Delogu G."/>
            <person name="Pusceddu C."/>
            <person name="Bua A."/>
            <person name="Fadda G."/>
            <person name="Brennan M.J."/>
            <person name="Zanetti S."/>
        </authorList>
    </citation>
    <scope>SUBCELLULAR LOCATION</scope>
    <scope>DOMAIN</scope>
    <source>
        <strain>H37Rv</strain>
    </source>
</reference>
<reference key="5">
    <citation type="journal article" date="2006" name="J. Bacteriol.">
        <title>Variable expression patterns of Mycobacterium tuberculosis PE_PGRS genes: evidence that PE_PGRS16 and PE_PGRS26 are inversely regulated in vivo.</title>
        <authorList>
            <person name="Dheenadhayalan V."/>
            <person name="Delogu G."/>
            <person name="Sanguinetti M."/>
            <person name="Fadda G."/>
            <person name="Brennan M.J."/>
        </authorList>
    </citation>
    <scope>INDUCTION</scope>
</reference>
<reference key="6">
    <citation type="journal article" date="2007" name="Clin. Vaccine Immunol.">
        <title>Differential B-cell responses are induced by Mycobacterium tuberculosis PE antigens Rv1169c, Rv0978c, and Rv1818c.</title>
        <authorList>
            <person name="Narayana Y."/>
            <person name="Joshi B."/>
            <person name="Katoch V.M."/>
            <person name="Mishra K.C."/>
            <person name="Balaji K.N."/>
        </authorList>
    </citation>
    <scope>BIOTECHNOLOGY</scope>
    <scope>INVOLVEMENT IN B-CELL RESPONSE</scope>
</reference>
<reference key="7">
    <citation type="journal article" date="2007" name="J. Biol. Chem.">
        <title>Execution of macrophage apoptosis by PE_PGRS33 of Mycobacterium tuberculosis is mediated by Toll-like receptor 2-dependent release of tumor necrosis factor-alpha.</title>
        <authorList>
            <person name="Basu S."/>
            <person name="Pathak S.K."/>
            <person name="Banerjee A."/>
            <person name="Pathak S."/>
            <person name="Bhattacharyya A."/>
            <person name="Yang Z."/>
            <person name="Talarico S."/>
            <person name="Kundu M."/>
            <person name="Basu J."/>
        </authorList>
    </citation>
    <scope>FUNCTION</scope>
    <scope>INTERACTION WITH TLR2</scope>
    <scope>DOMAIN</scope>
    <source>
        <strain>H37Rv</strain>
    </source>
</reference>
<reference key="8">
    <citation type="journal article" date="2007" name="Microbes Infect.">
        <title>Apoptosis triggered by Rv1818c, a PE family gene from Mycobacterium tuberculosis is regulated by mitochondrial intermediates in T cells.</title>
        <authorList>
            <person name="Balaji K.N."/>
            <person name="Goyal G."/>
            <person name="Narayana Y."/>
            <person name="Srinivas M."/>
            <person name="Chaturvedi R."/>
            <person name="Mohammad S."/>
        </authorList>
    </citation>
    <scope>FUNCTION IN INDUCTION OF APOPTOSIS</scope>
    <scope>SUBCELLULAR LOCATION</scope>
    <source>
        <strain>H37Rv</strain>
    </source>
</reference>
<reference key="9">
    <citation type="journal article" date="2007" name="Mol. Microbiol.">
        <title>PE is a functional domain responsible for protein translocation and localization on mycobacterial cell wall.</title>
        <authorList>
            <person name="Cascioferro A."/>
            <person name="Delogu G."/>
            <person name="Colone M."/>
            <person name="Sali M."/>
            <person name="Stringaro A."/>
            <person name="Arancia G."/>
            <person name="Fadda G."/>
            <person name="Palu G."/>
            <person name="Manganelli R."/>
        </authorList>
    </citation>
    <scope>SUBCELLULAR LOCATION</scope>
    <scope>DOMAIN</scope>
</reference>
<reference key="10">
    <citation type="journal article" date="2008" name="Microbiology">
        <title>A comparative study of host response to three Mycobacterium tuberculosis PE_PGRS proteins.</title>
        <authorList>
            <person name="Singh P.P."/>
            <person name="Parra M."/>
            <person name="Cadieux N."/>
            <person name="Brennan M.J."/>
        </authorList>
    </citation>
    <scope>SUBCELLULAR LOCATION</scope>
    <scope>EXPRESSION IN M.SMEGMATIS</scope>
</reference>
<reference key="11">
    <citation type="journal article" date="2009" name="Microb. Pathog.">
        <title>Expression of Mycobacterium tuberculosis pe_pgrs33 is repressed during stationary phase and stress conditions, and its transcription is mediated by sigma factor A.</title>
        <authorList>
            <person name="Vallecillo A.J."/>
            <person name="Espitia C."/>
        </authorList>
    </citation>
    <scope>INDUCTION</scope>
</reference>
<reference key="12">
    <citation type="journal article" date="2011" name="Microbiology">
        <title>Induction of cell death after localization to the host cell mitochondria by the Mycobacterium tuberculosis PE_PGRS33 protein.</title>
        <authorList>
            <person name="Cadieux N."/>
            <person name="Parra M."/>
            <person name="Cohen H."/>
            <person name="Maric D."/>
            <person name="Morris S.L."/>
            <person name="Brennan M.J."/>
        </authorList>
    </citation>
    <scope>SUBCELLULAR LOCATION</scope>
    <scope>DOMAIN</scope>
</reference>
<reference key="13">
    <citation type="journal article" date="2011" name="PLoS ONE">
        <title>Functional dissection of the PE domain responsible for translocation of PE_PGRS33 across the mycobacterial cell wall.</title>
        <authorList>
            <person name="Cascioferro A."/>
            <person name="Daleke M.H."/>
            <person name="Ventura M."/>
            <person name="Dona V."/>
            <person name="Delogu G."/>
            <person name="Palu G."/>
            <person name="Bitter W."/>
            <person name="Manganelli R."/>
        </authorList>
    </citation>
    <scope>SUBCELLULAR LOCATION</scope>
    <scope>EXPORT VIA ESX-5</scope>
    <scope>DOMAIN</scope>
</reference>
<reference key="14">
    <citation type="journal article" date="2013" name="Pathog. Dis.">
        <title>Functional dissection of protein domains involved in the immunomodulatory properties of PE_PGRS33 of Mycobacterium tuberculosis.</title>
        <authorList>
            <person name="Zumbo A."/>
            <person name="Palucci I."/>
            <person name="Cascioferro A."/>
            <person name="Sali M."/>
            <person name="Ventura M."/>
            <person name="D'Alfonso P."/>
            <person name="Iantomasi R."/>
            <person name="Di Sante G."/>
            <person name="Ria F."/>
            <person name="Sanguinetti M."/>
            <person name="Fadda G."/>
            <person name="Manganelli R."/>
            <person name="Delogu G."/>
        </authorList>
    </citation>
    <scope>FUNCTION</scope>
    <scope>DOMAIN</scope>
    <source>
        <strain>H37Rv</strain>
    </source>
</reference>
<reference key="15">
    <citation type="journal article" date="2014" name="Front. Immunol.">
        <title>The PGRS domain from PE_PGRS33 of Mycobacterium tuberculosis is target of humoral immune response in mice and humans.</title>
        <authorList>
            <person name="Cohen I."/>
            <person name="Parada C."/>
            <person name="Acosta-Gio E."/>
            <person name="Espitia C."/>
        </authorList>
    </citation>
    <scope>BIOTECHNOLOGY</scope>
    <scope>IMMUNE RESPONSE</scope>
</reference>
<reference key="16">
    <citation type="journal article" date="2015" name="Expert Rev. Vaccines">
        <title>A PE_PGRS33 protein of Mycobacterium tuberculosis: an ideal target for future tuberculosis vaccine design.</title>
        <authorList>
            <person name="Gastelum-Avina P."/>
            <person name="Velazquez C."/>
            <person name="Espitia C."/>
            <person name="Lares-Villa F."/>
            <person name="Garibay-Escobar A."/>
        </authorList>
    </citation>
    <scope>REVIEW</scope>
</reference>
<reference key="17">
    <citation type="journal article" date="2016" name="Biochemistry">
        <title>The PE_PGRS proteins of Mycobacterium tuberculosis are Ca(2+) binding mediators of host-pathogen interaction.</title>
        <authorList>
            <person name="Yeruva V.C."/>
            <person name="Kulkarni A."/>
            <person name="Khandelwal R."/>
            <person name="Sharma Y."/>
            <person name="Raghunand T.R."/>
        </authorList>
    </citation>
    <scope>FUNCTION</scope>
    <scope>ACTIVITY REGULATION</scope>
    <scope>INTERACTION WITH TLR2</scope>
    <scope>SUBCELLULAR LOCATION</scope>
</reference>
<reference key="18">
    <citation type="journal article" date="2016" name="PLoS ONE">
        <title>PE_PGRS33 contributes to Mycobacterium tuberculosis entry in macrophages through interaction with TLR2.</title>
        <authorList>
            <person name="Palucci I."/>
            <person name="Camassa S."/>
            <person name="Cascioferro A."/>
            <person name="Sali M."/>
            <person name="Anoosheh S."/>
            <person name="Zumbo A."/>
            <person name="Minerva M."/>
            <person name="Iantomasi R."/>
            <person name="De Maio F."/>
            <person name="Di Sante G."/>
            <person name="Ria F."/>
            <person name="Sanguinetti M."/>
            <person name="Palu G."/>
            <person name="Brennan M.J."/>
            <person name="Manganelli R."/>
            <person name="Delogu G."/>
        </authorList>
    </citation>
    <scope>FUNCTION</scope>
    <scope>INTERACTION WITH TLR2</scope>
    <scope>DOMAIN</scope>
    <scope>DISRUPTION PHENOTYPE</scope>
</reference>
<dbReference type="EMBL" id="AL123456">
    <property type="protein sequence ID" value="CCP44584.1"/>
    <property type="molecule type" value="Genomic_DNA"/>
</dbReference>
<dbReference type="PIR" id="C70720">
    <property type="entry name" value="C70720"/>
</dbReference>
<dbReference type="RefSeq" id="WP_010886133.1">
    <property type="nucleotide sequence ID" value="NC_000962.3"/>
</dbReference>
<dbReference type="RefSeq" id="YP_177846.1">
    <property type="nucleotide sequence ID" value="NC_000962.3"/>
</dbReference>
<dbReference type="STRING" id="83332.Rv1818c"/>
<dbReference type="PaxDb" id="83332-Rv1818c"/>
<dbReference type="GeneID" id="885551"/>
<dbReference type="KEGG" id="mtu:Rv1818c"/>
<dbReference type="KEGG" id="mtv:RVBD_1818c"/>
<dbReference type="PATRIC" id="fig|83332.111.peg.2023"/>
<dbReference type="TubercuList" id="Rv1818c"/>
<dbReference type="eggNOG" id="COG0657">
    <property type="taxonomic scope" value="Bacteria"/>
</dbReference>
<dbReference type="InParanoid" id="P9WIF5"/>
<dbReference type="Proteomes" id="UP000001584">
    <property type="component" value="Chromosome"/>
</dbReference>
<dbReference type="GO" id="GO:0009279">
    <property type="term" value="C:cell outer membrane"/>
    <property type="evidence" value="ECO:0007669"/>
    <property type="project" value="UniProtKB-SubCell"/>
</dbReference>
<dbReference type="GO" id="GO:0009986">
    <property type="term" value="C:cell surface"/>
    <property type="evidence" value="ECO:0007669"/>
    <property type="project" value="UniProtKB-SubCell"/>
</dbReference>
<dbReference type="GO" id="GO:0005576">
    <property type="term" value="C:extracellular region"/>
    <property type="evidence" value="ECO:0007669"/>
    <property type="project" value="UniProtKB-KW"/>
</dbReference>
<dbReference type="GO" id="GO:0009274">
    <property type="term" value="C:peptidoglycan-based cell wall"/>
    <property type="evidence" value="ECO:0000314"/>
    <property type="project" value="UniProtKB"/>
</dbReference>
<dbReference type="GO" id="GO:0046789">
    <property type="term" value="F:host cell surface receptor binding"/>
    <property type="evidence" value="ECO:0000353"/>
    <property type="project" value="MTBBASE"/>
</dbReference>
<dbReference type="GO" id="GO:0044650">
    <property type="term" value="P:adhesion of symbiont to host cell"/>
    <property type="evidence" value="ECO:0000315"/>
    <property type="project" value="UniProtKB"/>
</dbReference>
<dbReference type="GO" id="GO:0070482">
    <property type="term" value="P:response to oxygen levels"/>
    <property type="evidence" value="ECO:0000270"/>
    <property type="project" value="MTBBASE"/>
</dbReference>
<dbReference type="GO" id="GO:0042594">
    <property type="term" value="P:response to starvation"/>
    <property type="evidence" value="ECO:0000270"/>
    <property type="project" value="MTBBASE"/>
</dbReference>
<dbReference type="GO" id="GO:0052167">
    <property type="term" value="P:symbiont-mediated perturbation of host innate immune response"/>
    <property type="evidence" value="ECO:0000314"/>
    <property type="project" value="MTBBASE"/>
</dbReference>
<dbReference type="FunFam" id="1.10.287.850:FF:000001">
    <property type="entry name" value="PE_PGRS39"/>
    <property type="match status" value="1"/>
</dbReference>
<dbReference type="Gene3D" id="1.10.287.850">
    <property type="entry name" value="HP0062-like domain"/>
    <property type="match status" value="1"/>
</dbReference>
<dbReference type="InterPro" id="IPR000084">
    <property type="entry name" value="PE-PGRS_N"/>
</dbReference>
<dbReference type="InterPro" id="IPR048996">
    <property type="entry name" value="PGRS_rpt"/>
</dbReference>
<dbReference type="Pfam" id="PF00934">
    <property type="entry name" value="PE"/>
    <property type="match status" value="1"/>
</dbReference>
<dbReference type="Pfam" id="PF21526">
    <property type="entry name" value="PGRS"/>
    <property type="match status" value="1"/>
</dbReference>
<dbReference type="SUPFAM" id="SSF140459">
    <property type="entry name" value="PE/PPE dimer-like"/>
    <property type="match status" value="1"/>
</dbReference>
<feature type="chain" id="PRO_0000216164" description="PE-PGRS family protein PE_PGRS33">
    <location>
        <begin position="1"/>
        <end position="498"/>
    </location>
</feature>
<feature type="domain" description="PE" evidence="1">
    <location>
        <begin position="1"/>
        <end position="93"/>
    </location>
</feature>
<feature type="region of interest" description="Essential for translocation to the cell surface" evidence="13">
    <location>
        <begin position="1"/>
        <end position="30"/>
    </location>
</feature>
<feature type="region of interest" description="Interacts with TLR2" evidence="16">
    <location>
        <begin position="140"/>
        <end position="260"/>
    </location>
</feature>
<name>PG33_MYCTU</name>
<keyword id="KW-0106">Calcium</keyword>
<keyword id="KW-0998">Cell outer membrane</keyword>
<keyword id="KW-0134">Cell wall</keyword>
<keyword id="KW-0472">Membrane</keyword>
<keyword id="KW-1185">Reference proteome</keyword>
<keyword id="KW-0964">Secreted</keyword>
<keyword id="KW-0843">Virulence</keyword>
<accession>P9WIF5</accession>
<accession>L0TAP6</accession>
<accession>Q50615</accession>
<sequence>MSFVVTIPEALAAVATDLAGIGSTIGTANAAAAVPTTTVLAAAADEVSAAMAALFSGHAQAYQALSAQAALFHEQFVRALTAGAGSYAAAEAASAAPLEGVLDVINAPALALLGRPLIGNGANGAPGTGANGGDGGILIGNGGAGGSGAAGMPGGNGGAAGLFGNGGAGGAGGNVASGTAGFGGAGGAGGLLYGAGGAGGAGGRAGGGVGGIGGAGGAGGNGGLLFGAGGAGGVGGLAADAGDGGAGGDGGLFFGVGGAGGAGGTGTNVTGGAGGAGGNGGLLFGAGGVGGVGGDGVAFLGTAPGGPGGAGGAGGLFGVGGAGGAGGIGLVGNGGAGGSGGSALLWGDGGAGGAGGVGSTTGGAGGAGGNAGLLVGAGGAGGAGALGGGATGVGGAGGNGGTAGLLFGAGGAGGFGFGGAGGAGGLGGKAGLIGDGGDGGAGGNGTGAKGGDGGAGGGAILVGNGGNGGNAGSGTPNGSAGTGGAGGLLGKNGMNGLP</sequence>
<protein>
    <recommendedName>
        <fullName evidence="18">PE-PGRS family protein PE_PGRS33</fullName>
    </recommendedName>
</protein>
<comment type="function">
    <text evidence="6 7 14 16 17">Induces TNF-alpha release through human Toll-like receptor 2 (TLR2) signaling pathway, leading to macrophage apoptosis (PubMed:17095513, PubMed:17223373, PubMed:24106104). The signaling pathway involves TLR2-dependent activation of the mitogen-activated protein kinase kinase kinase 5 (ASK1), which activates the p38 and JNK MAPKs, leading to enhanced expression of TNF-alpha and tumor necrosis factor receptor superfamily member 1A (TNFRI) genes. Signals are amplified through classical caspase 8-dependent mitochondrial release of cytochrome c, leading to the activation of caspases 9 and 3 (PubMed:17095513). Mediates Ca(2+)-dependent up-regulation of the anti-inflammatory cytokine IL-10 (PubMed:27483162). Mediates entry into macrophages in a TLR2-dependent mechanism and activates the TLR2-dependent pro-adhesive pathway (PubMed:26978522).</text>
</comment>
<comment type="activity regulation">
    <text evidence="17">Binding of Ca(2+) to PE_PGRS33 induces conformational changes and increases affinity for TLR2.</text>
</comment>
<comment type="subunit">
    <text evidence="6 16 17">Interacts with human TLR2.</text>
</comment>
<comment type="subcellular location">
    <subcellularLocation>
        <location evidence="4 9 13 17">Secreted</location>
        <location evidence="4 9 13 17">Cell wall</location>
    </subcellularLocation>
    <subcellularLocation>
        <location evidence="4 9 10 13 17">Cell surface</location>
    </subcellularLocation>
    <subcellularLocation>
        <location evidence="9">Cell outer membrane</location>
    </subcellularLocation>
    <text evidence="4 7 12 13">Exported to the cell surface via the ESX-5 / type VII secretion system (T7SS) (PubMed:22110736). Localizes mostly at the cell poles (PubMed:15101979). Colocalizes to mitochondria in transfected eukaryotic cells (PubMed:17223373, PubMed:21081760).</text>
</comment>
<comment type="induction">
    <text evidence="3 5 11">Constitutively expressed in vitro, suggesting that it could be an essential gene (PubMed:11967065, PubMed:16672626). Expression is regulated by SigA. Down-regulated during stationary phase, under nutrient starvation and oxygen depletion (PubMed:19068228).</text>
</comment>
<comment type="domain">
    <text evidence="4 6 9 12 13 14 16">Contains an N-terminal PE domain, followed by a conserved linker region and a C-terminal PGRS domain (PubMed:18028308, PubMed:21081760). The PE domain is responsible for the export and localization to the cell wall (PubMed:15101979, PubMed:18028308, PubMed:22110736). The PGRS domain is required for TNF-alpha secretion and is responsible for the main immunomodulatory properties of the protein (PubMed:17095513, PubMed:24106104). Variations within the PGRS domain alter the levels of TNF-alpha induction and are likely to have an impact on the innate immune response (PubMed:17095513). PGRS domain is also required to mediate cell entry into macrophages (PubMed:26978522). Colocalization to the mitochondria of host cells is dependent on the linker region and the PGRS domain, but not the PE domain (PubMed:21081760).</text>
</comment>
<comment type="disruption phenotype">
    <text evidence="16">Deletion mutant is strongly impaired in its ability to enter macrophages. Deletion does not affect the intracellular growth in macrophages.</text>
</comment>
<comment type="biotechnology">
    <text evidence="2 8 15">PE domain induces protective cellular immune response and PGRS domain induces humoral immune response during infection in mice, suggesting that this protein is a promising candidate for the development of M.tuberculosis vaccines (PubMed:11500435). Immunization of mice with the PE_PGRS33 protein stimulated CD4(+) and CD8(+) T-cell proliferation as well as IFN-gamma secretion, supporting the potential use of PE_PGRS33 as a vaccine candidate for tuberculosis (PubMed:24904584). Elicits a strong B-cell humoral response among different clinical categories of both adult and child tuberculosis patients, indicating that it could be used in the serodiagnosis of tuberculosis (PubMed:17687113).</text>
</comment>
<comment type="miscellaneous">
    <text evidence="10">Expression of this gene in M.smegmatis leads to low levels of NO and IL-12, increased level of IL-10 and better survival of recombinant strains in macrophages.</text>
</comment>
<comment type="similarity">
    <text evidence="18">Belongs to the mycobacterial PE family. PGRS subfamily.</text>
</comment>
<evidence type="ECO:0000255" key="1"/>
<evidence type="ECO:0000269" key="2">
    <source>
    </source>
</evidence>
<evidence type="ECO:0000269" key="3">
    <source>
    </source>
</evidence>
<evidence type="ECO:0000269" key="4">
    <source>
    </source>
</evidence>
<evidence type="ECO:0000269" key="5">
    <source>
    </source>
</evidence>
<evidence type="ECO:0000269" key="6">
    <source>
    </source>
</evidence>
<evidence type="ECO:0000269" key="7">
    <source>
    </source>
</evidence>
<evidence type="ECO:0000269" key="8">
    <source>
    </source>
</evidence>
<evidence type="ECO:0000269" key="9">
    <source>
    </source>
</evidence>
<evidence type="ECO:0000269" key="10">
    <source>
    </source>
</evidence>
<evidence type="ECO:0000269" key="11">
    <source>
    </source>
</evidence>
<evidence type="ECO:0000269" key="12">
    <source>
    </source>
</evidence>
<evidence type="ECO:0000269" key="13">
    <source>
    </source>
</evidence>
<evidence type="ECO:0000269" key="14">
    <source>
    </source>
</evidence>
<evidence type="ECO:0000269" key="15">
    <source>
    </source>
</evidence>
<evidence type="ECO:0000269" key="16">
    <source>
    </source>
</evidence>
<evidence type="ECO:0000269" key="17">
    <source>
    </source>
</evidence>
<evidence type="ECO:0000305" key="18"/>
<evidence type="ECO:0000312" key="19">
    <source>
        <dbReference type="EMBL" id="CCP44584.1"/>
    </source>
</evidence>
<proteinExistence type="evidence at protein level"/>